<reference key="1">
    <citation type="journal article" date="2002" name="Science">
        <title>50 million years of genomic stasis in endosymbiotic bacteria.</title>
        <authorList>
            <person name="Tamas I."/>
            <person name="Klasson L."/>
            <person name="Canbaeck B."/>
            <person name="Naeslund A.K."/>
            <person name="Eriksson A.-S."/>
            <person name="Wernegreen J.J."/>
            <person name="Sandstroem J.P."/>
            <person name="Moran N.A."/>
            <person name="Andersson S.G.E."/>
        </authorList>
    </citation>
    <scope>NUCLEOTIDE SEQUENCE [LARGE SCALE GENOMIC DNA]</scope>
    <source>
        <strain>Sg</strain>
    </source>
</reference>
<evidence type="ECO:0000255" key="1">
    <source>
        <dbReference type="HAMAP-Rule" id="MF_00144"/>
    </source>
</evidence>
<gene>
    <name evidence="1" type="primary">mnmA</name>
    <name type="synonym">trmU</name>
    <name type="ordered locus">BUsg_252</name>
</gene>
<comment type="function">
    <text evidence="1">Catalyzes the 2-thiolation of uridine at the wobble position (U34) of tRNA(Lys), tRNA(Glu) and tRNA(Gln), leading to the formation of s(2)U34, the first step of tRNA-mnm(5)s(2)U34 synthesis. Sulfur is provided by IscS, via a sulfur-relay system. Binds ATP and its substrate tRNAs.</text>
</comment>
<comment type="catalytic activity">
    <reaction evidence="1">
        <text>S-sulfanyl-L-cysteinyl-[protein] + uridine(34) in tRNA + AH2 + ATP = 2-thiouridine(34) in tRNA + L-cysteinyl-[protein] + A + AMP + diphosphate + H(+)</text>
        <dbReference type="Rhea" id="RHEA:47032"/>
        <dbReference type="Rhea" id="RHEA-COMP:10131"/>
        <dbReference type="Rhea" id="RHEA-COMP:11726"/>
        <dbReference type="Rhea" id="RHEA-COMP:11727"/>
        <dbReference type="Rhea" id="RHEA-COMP:11728"/>
        <dbReference type="ChEBI" id="CHEBI:13193"/>
        <dbReference type="ChEBI" id="CHEBI:15378"/>
        <dbReference type="ChEBI" id="CHEBI:17499"/>
        <dbReference type="ChEBI" id="CHEBI:29950"/>
        <dbReference type="ChEBI" id="CHEBI:30616"/>
        <dbReference type="ChEBI" id="CHEBI:33019"/>
        <dbReference type="ChEBI" id="CHEBI:61963"/>
        <dbReference type="ChEBI" id="CHEBI:65315"/>
        <dbReference type="ChEBI" id="CHEBI:87170"/>
        <dbReference type="ChEBI" id="CHEBI:456215"/>
        <dbReference type="EC" id="2.8.1.13"/>
    </reaction>
</comment>
<comment type="subunit">
    <text evidence="1">Interacts with TusE.</text>
</comment>
<comment type="subcellular location">
    <subcellularLocation>
        <location evidence="1">Cytoplasm</location>
    </subcellularLocation>
</comment>
<comment type="similarity">
    <text evidence="1">Belongs to the MnmA/TRMU family.</text>
</comment>
<protein>
    <recommendedName>
        <fullName evidence="1">tRNA-specific 2-thiouridylase MnmA</fullName>
        <ecNumber evidence="1">2.8.1.13</ecNumber>
    </recommendedName>
</protein>
<keyword id="KW-0067">ATP-binding</keyword>
<keyword id="KW-0963">Cytoplasm</keyword>
<keyword id="KW-1015">Disulfide bond</keyword>
<keyword id="KW-0547">Nucleotide-binding</keyword>
<keyword id="KW-0694">RNA-binding</keyword>
<keyword id="KW-0808">Transferase</keyword>
<keyword id="KW-0819">tRNA processing</keyword>
<keyword id="KW-0820">tRNA-binding</keyword>
<feature type="chain" id="PRO_0000121616" description="tRNA-specific 2-thiouridylase MnmA">
    <location>
        <begin position="1"/>
        <end position="367"/>
    </location>
</feature>
<feature type="region of interest" description="Interaction with target base in tRNA" evidence="1">
    <location>
        <begin position="97"/>
        <end position="99"/>
    </location>
</feature>
<feature type="region of interest" description="Interaction with tRNA" evidence="1">
    <location>
        <begin position="149"/>
        <end position="151"/>
    </location>
</feature>
<feature type="region of interest" description="Interaction with tRNA" evidence="1">
    <location>
        <begin position="311"/>
        <end position="312"/>
    </location>
</feature>
<feature type="active site" description="Nucleophile" evidence="1">
    <location>
        <position position="102"/>
    </location>
</feature>
<feature type="active site" description="Cysteine persulfide intermediate" evidence="1">
    <location>
        <position position="199"/>
    </location>
</feature>
<feature type="binding site" evidence="1">
    <location>
        <begin position="11"/>
        <end position="18"/>
    </location>
    <ligand>
        <name>ATP</name>
        <dbReference type="ChEBI" id="CHEBI:30616"/>
    </ligand>
</feature>
<feature type="binding site" evidence="1">
    <location>
        <position position="37"/>
    </location>
    <ligand>
        <name>ATP</name>
        <dbReference type="ChEBI" id="CHEBI:30616"/>
    </ligand>
</feature>
<feature type="binding site" evidence="1">
    <location>
        <position position="127"/>
    </location>
    <ligand>
        <name>ATP</name>
        <dbReference type="ChEBI" id="CHEBI:30616"/>
    </ligand>
</feature>
<feature type="site" description="Interaction with tRNA" evidence="1">
    <location>
        <position position="128"/>
    </location>
</feature>
<feature type="site" description="Interaction with tRNA" evidence="1">
    <location>
        <position position="344"/>
    </location>
</feature>
<feature type="disulfide bond" description="Alternate" evidence="1">
    <location>
        <begin position="102"/>
        <end position="199"/>
    </location>
</feature>
<proteinExistence type="inferred from homology"/>
<sequence length="367" mass="41861">MIKKNKKVIIAMSGGVDSSVSAWFLKNENYQVEGLFMKNWEEDDEKEYCNAAKDLSDAEEVCKKLNIHLHKVNFSKEYWEKVFENFLNEHKKGKTPNPDILCNKEIKFKIFFNYAIQELQSDYIATGHYAQIKKKNGKYFLLKAVDLNKDQSYFLYTLKGIQLKNILFPIGGLKKSQVRIIAKKIGLKVAEKKDSTGICFIGPKKINNFLNRYIKAEKGDIITTEGTIVGKHNGLFCYTLGQRKGLGIGGIKGNYNIPWYVIEKNIINNTLIIAQGSCNKRLMSIGLIAEKINWINDDKIIFPFSCQAKIRYRQIDIFCNIKYINDFLIKVLFDSPVSSVTPGQSIVFYSSKICLGGGVIQSRLPLL</sequence>
<organism>
    <name type="scientific">Buchnera aphidicola subsp. Schizaphis graminum (strain Sg)</name>
    <dbReference type="NCBI Taxonomy" id="198804"/>
    <lineage>
        <taxon>Bacteria</taxon>
        <taxon>Pseudomonadati</taxon>
        <taxon>Pseudomonadota</taxon>
        <taxon>Gammaproteobacteria</taxon>
        <taxon>Enterobacterales</taxon>
        <taxon>Erwiniaceae</taxon>
        <taxon>Buchnera</taxon>
    </lineage>
</organism>
<dbReference type="EC" id="2.8.1.13" evidence="1"/>
<dbReference type="EMBL" id="AE013218">
    <property type="protein sequence ID" value="AAM67811.1"/>
    <property type="molecule type" value="Genomic_DNA"/>
</dbReference>
<dbReference type="RefSeq" id="WP_011053778.1">
    <property type="nucleotide sequence ID" value="NC_004061.1"/>
</dbReference>
<dbReference type="SMR" id="Q8K9Q8"/>
<dbReference type="STRING" id="198804.BUsg_252"/>
<dbReference type="GeneID" id="93003722"/>
<dbReference type="KEGG" id="bas:BUsg_252"/>
<dbReference type="eggNOG" id="COG0482">
    <property type="taxonomic scope" value="Bacteria"/>
</dbReference>
<dbReference type="HOGENOM" id="CLU_035188_1_0_6"/>
<dbReference type="Proteomes" id="UP000000416">
    <property type="component" value="Chromosome"/>
</dbReference>
<dbReference type="GO" id="GO:0005737">
    <property type="term" value="C:cytoplasm"/>
    <property type="evidence" value="ECO:0007669"/>
    <property type="project" value="UniProtKB-SubCell"/>
</dbReference>
<dbReference type="GO" id="GO:0005524">
    <property type="term" value="F:ATP binding"/>
    <property type="evidence" value="ECO:0007669"/>
    <property type="project" value="UniProtKB-KW"/>
</dbReference>
<dbReference type="GO" id="GO:0000049">
    <property type="term" value="F:tRNA binding"/>
    <property type="evidence" value="ECO:0007669"/>
    <property type="project" value="UniProtKB-KW"/>
</dbReference>
<dbReference type="GO" id="GO:0103016">
    <property type="term" value="F:tRNA-uridine 2-sulfurtransferase activity"/>
    <property type="evidence" value="ECO:0007669"/>
    <property type="project" value="UniProtKB-EC"/>
</dbReference>
<dbReference type="GO" id="GO:0002143">
    <property type="term" value="P:tRNA wobble position uridine thiolation"/>
    <property type="evidence" value="ECO:0007669"/>
    <property type="project" value="TreeGrafter"/>
</dbReference>
<dbReference type="CDD" id="cd01998">
    <property type="entry name" value="MnmA_TRMU-like"/>
    <property type="match status" value="1"/>
</dbReference>
<dbReference type="FunFam" id="2.30.30.280:FF:000001">
    <property type="entry name" value="tRNA-specific 2-thiouridylase MnmA"/>
    <property type="match status" value="1"/>
</dbReference>
<dbReference type="FunFam" id="2.40.30.10:FF:000023">
    <property type="entry name" value="tRNA-specific 2-thiouridylase MnmA"/>
    <property type="match status" value="1"/>
</dbReference>
<dbReference type="FunFam" id="3.40.50.620:FF:000004">
    <property type="entry name" value="tRNA-specific 2-thiouridylase MnmA"/>
    <property type="match status" value="1"/>
</dbReference>
<dbReference type="Gene3D" id="2.30.30.280">
    <property type="entry name" value="Adenine nucleotide alpha hydrolases-like domains"/>
    <property type="match status" value="1"/>
</dbReference>
<dbReference type="Gene3D" id="3.40.50.620">
    <property type="entry name" value="HUPs"/>
    <property type="match status" value="1"/>
</dbReference>
<dbReference type="Gene3D" id="2.40.30.10">
    <property type="entry name" value="Translation factors"/>
    <property type="match status" value="1"/>
</dbReference>
<dbReference type="HAMAP" id="MF_00144">
    <property type="entry name" value="tRNA_thiouridyl_MnmA"/>
    <property type="match status" value="1"/>
</dbReference>
<dbReference type="InterPro" id="IPR004506">
    <property type="entry name" value="MnmA-like"/>
</dbReference>
<dbReference type="InterPro" id="IPR046885">
    <property type="entry name" value="MnmA-like_C"/>
</dbReference>
<dbReference type="InterPro" id="IPR046884">
    <property type="entry name" value="MnmA-like_central"/>
</dbReference>
<dbReference type="InterPro" id="IPR023382">
    <property type="entry name" value="MnmA-like_central_sf"/>
</dbReference>
<dbReference type="InterPro" id="IPR014729">
    <property type="entry name" value="Rossmann-like_a/b/a_fold"/>
</dbReference>
<dbReference type="NCBIfam" id="NF001138">
    <property type="entry name" value="PRK00143.1"/>
    <property type="match status" value="1"/>
</dbReference>
<dbReference type="NCBIfam" id="TIGR00420">
    <property type="entry name" value="trmU"/>
    <property type="match status" value="1"/>
</dbReference>
<dbReference type="PANTHER" id="PTHR11933:SF5">
    <property type="entry name" value="MITOCHONDRIAL TRNA-SPECIFIC 2-THIOURIDYLASE 1"/>
    <property type="match status" value="1"/>
</dbReference>
<dbReference type="PANTHER" id="PTHR11933">
    <property type="entry name" value="TRNA 5-METHYLAMINOMETHYL-2-THIOURIDYLATE -METHYLTRANSFERASE"/>
    <property type="match status" value="1"/>
</dbReference>
<dbReference type="Pfam" id="PF03054">
    <property type="entry name" value="tRNA_Me_trans"/>
    <property type="match status" value="1"/>
</dbReference>
<dbReference type="Pfam" id="PF20258">
    <property type="entry name" value="tRNA_Me_trans_C"/>
    <property type="match status" value="1"/>
</dbReference>
<dbReference type="Pfam" id="PF20259">
    <property type="entry name" value="tRNA_Me_trans_M"/>
    <property type="match status" value="1"/>
</dbReference>
<dbReference type="SUPFAM" id="SSF52402">
    <property type="entry name" value="Adenine nucleotide alpha hydrolases-like"/>
    <property type="match status" value="1"/>
</dbReference>
<name>MNMA_BUCAP</name>
<accession>Q8K9Q8</accession>